<reference key="1">
    <citation type="journal article" date="1994" name="J. Biol. Chem.">
        <title>Sequencing and characterization of the ntp gene cluster for vacuolar-type Na(+)-translocating ATPase of Enterococcus hirae.</title>
        <authorList>
            <person name="Takase K."/>
            <person name="Kakinuma S."/>
            <person name="Yamato I."/>
            <person name="Konishi K."/>
            <person name="Igarashi K."/>
            <person name="Kakinuma Y."/>
        </authorList>
    </citation>
    <scope>NUCLEOTIDE SEQUENCE [GENOMIC DNA]</scope>
    <source>
        <strain>ATCC 9790 / DSM 20160 / JCM 8729 / LMG 6399 / NBRC 3181 / NCIMB 6459 / NCDO 1258 / NCTC 12367 / WDCM 00089 / R</strain>
    </source>
</reference>
<reference key="2">
    <citation type="journal article" date="2012" name="J. Bacteriol.">
        <title>Genome sequence of Enterococcus hirae (Streptococcus faecalis) ATCC 9790, a model organism for the study of ion transport, bioenergetics, and copper homeostasis.</title>
        <authorList>
            <person name="Gaechter T."/>
            <person name="Wunderlin C."/>
            <person name="Schmidheini T."/>
            <person name="Solioz M."/>
        </authorList>
    </citation>
    <scope>NUCLEOTIDE SEQUENCE [LARGE SCALE GENOMIC DNA]</scope>
    <source>
        <strain>ATCC 9790 / DSM 20160 / JCM 8729 / LMG 6399 / NBRC 3181 / NCIMB 6459 / NCDO 1258 / NCTC 12367 / WDCM 00089 / R</strain>
    </source>
</reference>
<reference key="3">
    <citation type="journal article" date="1994" name="J. Biol. Chem.">
        <title>Operon of vacuolar-type Na(+)-ATPase of Enterococcus hirae.</title>
        <authorList>
            <person name="Solioz M."/>
            <person name="Davies K."/>
        </authorList>
    </citation>
    <scope>NUCLEOTIDE SEQUENCE [GENOMIC DNA] OF 43-117</scope>
    <source>
        <strain>ATCC 9790 / DSM 20160 / JCM 8729 / LMG 6399 / NBRC 3181 / NCIMB 6459 / NCDO 1258 / NCTC 12367 / WDCM 00089 / R</strain>
    </source>
</reference>
<dbReference type="EMBL" id="D17462">
    <property type="protein sequence ID" value="BAA04269.1"/>
    <property type="molecule type" value="Genomic_DNA"/>
</dbReference>
<dbReference type="EMBL" id="CP003504">
    <property type="protein sequence ID" value="AFM70573.1"/>
    <property type="status" value="ALT_INIT"/>
    <property type="molecule type" value="Genomic_DNA"/>
</dbReference>
<dbReference type="EMBL" id="X76913">
    <property type="protein sequence ID" value="CAA54235.1"/>
    <property type="molecule type" value="Genomic_DNA"/>
</dbReference>
<dbReference type="PIR" id="A53610">
    <property type="entry name" value="A53610"/>
</dbReference>
<dbReference type="RefSeq" id="WP_243464880.1">
    <property type="nucleotide sequence ID" value="NC_018081.1"/>
</dbReference>
<dbReference type="SMR" id="P43437"/>
<dbReference type="TCDB" id="3.A.2.2.2">
    <property type="family name" value="the h+- or na+-translocating f-type, v-type and a-type atpase (f-atpase) superfamily"/>
</dbReference>
<dbReference type="KEGG" id="ehr:EHR_08230"/>
<dbReference type="PATRIC" id="fig|768486.3.peg.1569"/>
<dbReference type="eggNOG" id="ENOG503088Z">
    <property type="taxonomic scope" value="Bacteria"/>
</dbReference>
<dbReference type="HOGENOM" id="CLU_2046055_0_0_9"/>
<dbReference type="BioCyc" id="MetaCyc:MONOMER-14151"/>
<dbReference type="Proteomes" id="UP000002895">
    <property type="component" value="Chromosome"/>
</dbReference>
<dbReference type="GO" id="GO:0006814">
    <property type="term" value="P:sodium ion transport"/>
    <property type="evidence" value="ECO:0007669"/>
    <property type="project" value="UniProtKB-KW"/>
</dbReference>
<comment type="function">
    <text>Involved in ATP-driven sodium extrusion.</text>
</comment>
<comment type="similarity">
    <text evidence="2">Belongs to the V-ATPase G subunit family.</text>
</comment>
<comment type="sequence caution" evidence="2">
    <conflict type="erroneous initiation">
        <sequence resource="EMBL-CDS" id="AFM70573"/>
    </conflict>
    <text>Extended N-terminus.</text>
</comment>
<gene>
    <name type="primary">ntpF</name>
    <name type="synonym">ntpL</name>
    <name type="ordered locus">EHR_08230</name>
</gene>
<protein>
    <recommendedName>
        <fullName>V-type sodium ATPase subunit F</fullName>
    </recommendedName>
    <alternativeName>
        <fullName>Na(+)-translocating ATPase subunit F</fullName>
    </alternativeName>
    <alternativeName>
        <fullName>V-type sodium pump subunit F</fullName>
    </alternativeName>
</protein>
<feature type="chain" id="PRO_0000192917" description="V-type sodium ATPase subunit F">
    <location>
        <begin position="1"/>
        <end position="117"/>
    </location>
</feature>
<feature type="region of interest" description="Disordered" evidence="1">
    <location>
        <begin position="1"/>
        <end position="20"/>
    </location>
</feature>
<feature type="compositionally biased region" description="Basic and acidic residues" evidence="1">
    <location>
        <begin position="7"/>
        <end position="20"/>
    </location>
</feature>
<feature type="sequence conflict" description="In Ref. 1; BAA04269 and 3; CAA54235." evidence="2" ref="1 3">
    <original>E</original>
    <variation>R</variation>
    <location>
        <position position="56"/>
    </location>
</feature>
<evidence type="ECO:0000256" key="1">
    <source>
        <dbReference type="SAM" id="MobiDB-lite"/>
    </source>
</evidence>
<evidence type="ECO:0000305" key="2"/>
<organism>
    <name type="scientific">Enterococcus hirae (strain ATCC 9790 / DSM 20160 / JCM 8729 / LMG 6399 / NBRC 3181 / NCIMB 6459 / NCDO 1258 / NCTC 12367 / WDCM 00089 / R)</name>
    <dbReference type="NCBI Taxonomy" id="768486"/>
    <lineage>
        <taxon>Bacteria</taxon>
        <taxon>Bacillati</taxon>
        <taxon>Bacillota</taxon>
        <taxon>Bacilli</taxon>
        <taxon>Lactobacillales</taxon>
        <taxon>Enterococcaceae</taxon>
        <taxon>Enterococcus</taxon>
    </lineage>
</organism>
<accession>P43437</accession>
<accession>I6SD33</accession>
<sequence length="117" mass="14229">MARILTRIKEAEENNQKKEEQVKAELAQYEQLKNNELIDLNKEFQERLTKLMKEKEKNEEEVTEDEQHKLELILEQFRQKVLEIEKTYLEKEEEEIAKKKNLTNEIIERMKQNNGCH</sequence>
<proteinExistence type="inferred from homology"/>
<name>NTPF_ENTHA</name>
<keyword id="KW-0406">Ion transport</keyword>
<keyword id="KW-0915">Sodium</keyword>
<keyword id="KW-0739">Sodium transport</keyword>
<keyword id="KW-0813">Transport</keyword>